<dbReference type="EMBL" id="AY179509">
    <property type="protein sequence ID" value="AAO32083.1"/>
    <property type="molecule type" value="Genomic_RNA"/>
</dbReference>
<dbReference type="RefSeq" id="NP_795336.1">
    <property type="nucleotide sequence ID" value="NC_004579.1"/>
</dbReference>
<dbReference type="SMR" id="Q80KJ6"/>
<dbReference type="GeneID" id="1482921"/>
<dbReference type="KEGG" id="vg:1482921"/>
<dbReference type="OrthoDB" id="2793at10239"/>
<dbReference type="Proteomes" id="UP000007773">
    <property type="component" value="Genome"/>
</dbReference>
<dbReference type="GO" id="GO:0039617">
    <property type="term" value="C:T=3 icosahedral viral capsid"/>
    <property type="evidence" value="ECO:0000250"/>
    <property type="project" value="UniProtKB"/>
</dbReference>
<dbReference type="GO" id="GO:0075512">
    <property type="term" value="P:clathrin-dependent endocytosis of virus by host cell"/>
    <property type="evidence" value="ECO:0000250"/>
    <property type="project" value="UniProtKB"/>
</dbReference>
<dbReference type="FunFam" id="2.60.120.20:FF:000007">
    <property type="entry name" value="Capsid polyprotein VP90"/>
    <property type="match status" value="1"/>
</dbReference>
<dbReference type="Gene3D" id="2.60.120.20">
    <property type="match status" value="1"/>
</dbReference>
<dbReference type="InterPro" id="IPR004337">
    <property type="entry name" value="Astro_capsid_N"/>
</dbReference>
<dbReference type="InterPro" id="IPR048802">
    <property type="entry name" value="SP2_M"/>
</dbReference>
<dbReference type="InterPro" id="IPR029053">
    <property type="entry name" value="Viral_coat"/>
</dbReference>
<dbReference type="Pfam" id="PF03115">
    <property type="entry name" value="Astro_capsid_N"/>
    <property type="match status" value="1"/>
</dbReference>
<dbReference type="Pfam" id="PF20751">
    <property type="entry name" value="SP2_M"/>
    <property type="match status" value="1"/>
</dbReference>
<accession>Q80KJ6</accession>
<name>CAPSD_MASV1</name>
<organism>
    <name type="scientific">Mink astrovirus 1</name>
    <name type="common">MAstV-1</name>
    <dbReference type="NCBI Taxonomy" id="1239574"/>
    <lineage>
        <taxon>Viruses</taxon>
        <taxon>Riboviria</taxon>
        <taxon>Orthornavirae</taxon>
        <taxon>Pisuviricota</taxon>
        <taxon>Stelpaviricetes</taxon>
        <taxon>Stellavirales</taxon>
        <taxon>Astroviridae</taxon>
        <taxon>Mamastrovirus</taxon>
    </lineage>
</organism>
<gene>
    <name type="ORF">ORF2</name>
</gene>
<organismHost>
    <name type="scientific">Neovison vison</name>
    <name type="common">American mink</name>
    <name type="synonym">Mustela vison</name>
    <dbReference type="NCBI Taxonomy" id="452646"/>
</organismHost>
<evidence type="ECO:0000250" key="1">
    <source>
        <dbReference type="UniProtKB" id="C7BG48"/>
    </source>
</evidence>
<evidence type="ECO:0000250" key="2">
    <source>
        <dbReference type="UniProtKB" id="O12792"/>
    </source>
</evidence>
<evidence type="ECO:0000250" key="3">
    <source>
        <dbReference type="UniProtKB" id="Q9IFX1"/>
    </source>
</evidence>
<evidence type="ECO:0000256" key="4">
    <source>
        <dbReference type="SAM" id="MobiDB-lite"/>
    </source>
</evidence>
<evidence type="ECO:0000305" key="5"/>
<comment type="function">
    <molecule>Capsid polyprotein VP86</molecule>
    <text evidence="3">The capsid polyprotein VP90 self-assembles and undergoes a proteolytic cleavage by host caspases to yield the immature VP70 virion.</text>
</comment>
<comment type="function">
    <molecule>Core protein VP33</molecule>
    <text evidence="2">Self-assembles to form an icosahedral capsid with a T=3 symmetry, about 43 nm in diameter.</text>
</comment>
<comment type="function">
    <molecule>Spike protein VP38</molecule>
    <text evidence="1 2">Forms the spikes at the surface of the virion (By similarity). Plays a role in the attachment to target host cell (By similarity).</text>
</comment>
<comment type="subunit">
    <molecule>Spike protein VP38</molecule>
    <text evidence="1">Homodimer.</text>
</comment>
<comment type="subcellular location">
    <molecule>Capsid polyprotein VP86</molecule>
    <subcellularLocation>
        <location evidence="3">Virion</location>
    </subcellularLocation>
    <text evidence="3">Immature capsid.</text>
</comment>
<comment type="subcellular location">
    <molecule>Core protein VP33</molecule>
    <subcellularLocation>
        <location evidence="1">Virion</location>
    </subcellularLocation>
    <text evidence="2">Capsid.</text>
</comment>
<comment type="subcellular location">
    <molecule>Spike protein VP38</molecule>
    <subcellularLocation>
        <location evidence="1">Virion</location>
    </subcellularLocation>
    <text evidence="2">Capsid.</text>
</comment>
<comment type="domain">
    <molecule>Spike protein VP38</molecule>
    <text evidence="3">Contains the core attachment region and the P2 globular region.</text>
</comment>
<comment type="domain">
    <molecule>Capsid polyprotein VP86</molecule>
    <text evidence="1">Contains a lipid disrupting region that is exposed after trypsin treatment.</text>
</comment>
<comment type="domain">
    <molecule>Capsid polyprotein VP86</molecule>
    <text evidence="1">The highly basic N-terminus region binds to the viral RNA genome.</text>
</comment>
<comment type="PTM">
    <molecule>Capsid polyprotein VP86</molecule>
    <text evidence="1">Specific enzymatic cleavages by the host yield mature proteins. VP86 is processed into VP33 and VP38. Host caspases are not involved in processing capsid precursor.</text>
</comment>
<comment type="similarity">
    <text evidence="5">Belongs to the astroviridae capsid polyprotein family.</text>
</comment>
<protein>
    <recommendedName>
        <fullName evidence="1">Capsid polyprotein VP86</fullName>
    </recommendedName>
    <component>
        <recommendedName>
            <fullName evidence="1">Core protein VP33</fullName>
        </recommendedName>
    </component>
    <component>
        <recommendedName>
            <fullName evidence="1">Spike protein VP38</fullName>
        </recommendedName>
    </component>
</protein>
<reference key="1">
    <citation type="journal article" date="2003" name="J. Gen. Virol.">
        <title>Molecular characterization of a novel astrovirus associated with disease in mink.</title>
        <authorList>
            <person name="Mittelholzer C."/>
            <person name="Hedlund K.O."/>
            <person name="Englund L."/>
            <person name="Dietz H.H."/>
            <person name="Svensson L."/>
        </authorList>
    </citation>
    <scope>NUCLEOTIDE SEQUENCE [GENOMIC RNA]</scope>
</reference>
<keyword id="KW-0167">Capsid protein</keyword>
<keyword id="KW-1165">Clathrin-mediated endocytosis of virus by host</keyword>
<keyword id="KW-1142">T=3 icosahedral capsid protein</keyword>
<keyword id="KW-1162">Viral penetration into host cytoplasm</keyword>
<keyword id="KW-0946">Virion</keyword>
<keyword id="KW-1164">Virus endocytosis by host</keyword>
<keyword id="KW-1160">Virus entry into host cell</keyword>
<feature type="chain" id="PRO_0000320239" description="Capsid polyprotein VP86">
    <location>
        <begin position="1"/>
        <end position="775"/>
    </location>
</feature>
<feature type="chain" id="PRO_0000460931" description="Core protein VP33" evidence="1">
    <location>
        <begin position="1"/>
        <end position="314"/>
    </location>
</feature>
<feature type="chain" id="PRO_0000460932" description="Spike protein VP38" evidence="1">
    <location>
        <begin position="365"/>
        <end position="696"/>
    </location>
</feature>
<feature type="region of interest" description="Basic" evidence="3">
    <location>
        <begin position="2"/>
        <end position="71"/>
    </location>
</feature>
<feature type="region of interest" description="Disordered" evidence="4">
    <location>
        <begin position="25"/>
        <end position="61"/>
    </location>
</feature>
<feature type="region of interest" description="Inner core" evidence="3">
    <location>
        <begin position="72"/>
        <end position="264"/>
    </location>
</feature>
<feature type="region of interest" description="Disordered" evidence="4">
    <location>
        <begin position="707"/>
        <end position="743"/>
    </location>
</feature>
<feature type="compositionally biased region" description="Basic residues" evidence="4">
    <location>
        <begin position="41"/>
        <end position="50"/>
    </location>
</feature>
<feature type="compositionally biased region" description="Acidic residues" evidence="4">
    <location>
        <begin position="712"/>
        <end position="731"/>
    </location>
</feature>
<feature type="site" description="Cleavage" evidence="1">
    <location>
        <begin position="314"/>
        <end position="315"/>
    </location>
</feature>
<feature type="site" description="Cleavage" evidence="1">
    <location>
        <begin position="364"/>
        <end position="365"/>
    </location>
</feature>
<proteinExistence type="inferred from homology"/>
<sequence length="775" mass="84161">MASANQAAKAEAKKVIEKVAKEVIKETKNSAQRNQGPGKRWNSKKGRHMPKNNNNKGMKRTVDNEVKQKLKKEGLEGPRSRFSVRVSATIGKIGPNKEQGPELQIATFLHPSLMKEPNDGTNFGPLQAAAAQWGLWRLSSLEVKCTPLVGSSAVTGSIYRMSLNLTQSPGNASWGGLGARKHKDIPAGKSVSWKLQRGDLAGPRQTWWMTDTNEEGGQSCGPMLEIHGLGKTSSTYQSQDWTGDLFIVEVLGRWEFTNYNAKPALGTLDRKSEDYASDATGPGIMVGDDGVMKMTLPTASSLARFMSDASERSPVNEGSVGETIWHIVDEGAGLASSVAPTPFSWLIKGAWWFVKKLAGRSGANADEQYVVYASLADAQNNKPVMANRFDHTKKATTLTVTQVNSPNTGPGVTQAAYHTENPFPLVPATQPPPPRSIVVVNATARPFGYVKYNTGDSNVKSHGKFDGTQYHFTLKRGSTVSYASAAYILTDVSMLTYEGNRVTGCYDPGWMEPTGITVHYRNESSAFGRVLAYEIDQWGSTSDNHFTIGVWLVQTIKDLPAHDTTVWPYIPLPYVSAGNCTAPPVQVALDKACVPYLTKVGVTSHQQCTVRQPQVRSGTFMLVYSIGTNTPATTAGFTTGQPLGEATNASALPEGKISTSGFWERALSAVAPYQDFISVKFTLPQGPHADPRVDALLDLIQQRFNLKPVDASESEDEDEDSPSGSEEEPCGEEPTPPQPTPRLKLAKEMMYEALRDSDWTHVDAEALLAAISSKN</sequence>